<dbReference type="EC" id="1.9.6.1" evidence="1"/>
<dbReference type="EMBL" id="AP006840">
    <property type="protein sequence ID" value="BAD39902.1"/>
    <property type="molecule type" value="Genomic_DNA"/>
</dbReference>
<dbReference type="RefSeq" id="WP_011195049.1">
    <property type="nucleotide sequence ID" value="NC_006177.1"/>
</dbReference>
<dbReference type="SMR" id="Q67QZ1"/>
<dbReference type="STRING" id="292459.STH917"/>
<dbReference type="KEGG" id="sth:STH917"/>
<dbReference type="eggNOG" id="COG0243">
    <property type="taxonomic scope" value="Bacteria"/>
</dbReference>
<dbReference type="HOGENOM" id="CLU_000422_13_4_9"/>
<dbReference type="OrthoDB" id="9803192at2"/>
<dbReference type="Proteomes" id="UP000000417">
    <property type="component" value="Chromosome"/>
</dbReference>
<dbReference type="GO" id="GO:0005576">
    <property type="term" value="C:extracellular region"/>
    <property type="evidence" value="ECO:0007669"/>
    <property type="project" value="UniProtKB-SubCell"/>
</dbReference>
<dbReference type="GO" id="GO:0016020">
    <property type="term" value="C:membrane"/>
    <property type="evidence" value="ECO:0007669"/>
    <property type="project" value="TreeGrafter"/>
</dbReference>
<dbReference type="GO" id="GO:0009325">
    <property type="term" value="C:nitrate reductase complex"/>
    <property type="evidence" value="ECO:0007669"/>
    <property type="project" value="TreeGrafter"/>
</dbReference>
<dbReference type="GO" id="GO:0051539">
    <property type="term" value="F:4 iron, 4 sulfur cluster binding"/>
    <property type="evidence" value="ECO:0007669"/>
    <property type="project" value="UniProtKB-KW"/>
</dbReference>
<dbReference type="GO" id="GO:0009055">
    <property type="term" value="F:electron transfer activity"/>
    <property type="evidence" value="ECO:0007669"/>
    <property type="project" value="UniProtKB-UniRule"/>
</dbReference>
<dbReference type="GO" id="GO:0005506">
    <property type="term" value="F:iron ion binding"/>
    <property type="evidence" value="ECO:0007669"/>
    <property type="project" value="UniProtKB-UniRule"/>
</dbReference>
<dbReference type="GO" id="GO:0030151">
    <property type="term" value="F:molybdenum ion binding"/>
    <property type="evidence" value="ECO:0007669"/>
    <property type="project" value="InterPro"/>
</dbReference>
<dbReference type="GO" id="GO:0043546">
    <property type="term" value="F:molybdopterin cofactor binding"/>
    <property type="evidence" value="ECO:0007669"/>
    <property type="project" value="InterPro"/>
</dbReference>
<dbReference type="GO" id="GO:0050140">
    <property type="term" value="F:nitrate reductase (cytochrome) activity"/>
    <property type="evidence" value="ECO:0007669"/>
    <property type="project" value="UniProtKB-EC"/>
</dbReference>
<dbReference type="GO" id="GO:0006777">
    <property type="term" value="P:Mo-molybdopterin cofactor biosynthetic process"/>
    <property type="evidence" value="ECO:0007669"/>
    <property type="project" value="UniProtKB-UniRule"/>
</dbReference>
<dbReference type="GO" id="GO:0042128">
    <property type="term" value="P:nitrate assimilation"/>
    <property type="evidence" value="ECO:0007669"/>
    <property type="project" value="UniProtKB-UniRule"/>
</dbReference>
<dbReference type="CDD" id="cd02791">
    <property type="entry name" value="MopB_CT_Nitrate-R-NapA-like"/>
    <property type="match status" value="1"/>
</dbReference>
<dbReference type="CDD" id="cd02754">
    <property type="entry name" value="MopB_Nitrate-R-NapA-like"/>
    <property type="match status" value="1"/>
</dbReference>
<dbReference type="FunFam" id="2.40.40.20:FF:000005">
    <property type="entry name" value="Periplasmic nitrate reductase"/>
    <property type="match status" value="1"/>
</dbReference>
<dbReference type="Gene3D" id="2.40.40.20">
    <property type="match status" value="1"/>
</dbReference>
<dbReference type="Gene3D" id="3.40.50.740">
    <property type="match status" value="1"/>
</dbReference>
<dbReference type="Gene3D" id="2.20.25.90">
    <property type="entry name" value="ADC-like domains"/>
    <property type="match status" value="1"/>
</dbReference>
<dbReference type="Gene3D" id="3.40.228.10">
    <property type="entry name" value="Dimethylsulfoxide Reductase, domain 2"/>
    <property type="match status" value="1"/>
</dbReference>
<dbReference type="HAMAP" id="MF_01630">
    <property type="entry name" value="Nitrate_reduct_NapA"/>
    <property type="match status" value="1"/>
</dbReference>
<dbReference type="InterPro" id="IPR009010">
    <property type="entry name" value="Asp_de-COase-like_dom_sf"/>
</dbReference>
<dbReference type="InterPro" id="IPR041957">
    <property type="entry name" value="CT_Nitrate-R-NapA-like"/>
</dbReference>
<dbReference type="InterPro" id="IPR006657">
    <property type="entry name" value="MoPterin_dinucl-bd_dom"/>
</dbReference>
<dbReference type="InterPro" id="IPR006656">
    <property type="entry name" value="Mopterin_OxRdtase"/>
</dbReference>
<dbReference type="InterPro" id="IPR006963">
    <property type="entry name" value="Mopterin_OxRdtase_4Fe-4S_dom"/>
</dbReference>
<dbReference type="InterPro" id="IPR027467">
    <property type="entry name" value="MopterinOxRdtase_cofactor_BS"/>
</dbReference>
<dbReference type="InterPro" id="IPR010051">
    <property type="entry name" value="Periplasm_NO3_reductase_lsu"/>
</dbReference>
<dbReference type="InterPro" id="IPR050123">
    <property type="entry name" value="Prok_molybdopt-oxidoreductase"/>
</dbReference>
<dbReference type="InterPro" id="IPR006311">
    <property type="entry name" value="TAT_signal"/>
</dbReference>
<dbReference type="InterPro" id="IPR019546">
    <property type="entry name" value="TAT_signal_bac_arc"/>
</dbReference>
<dbReference type="NCBIfam" id="TIGR01409">
    <property type="entry name" value="TAT_signal_seq"/>
    <property type="match status" value="1"/>
</dbReference>
<dbReference type="PANTHER" id="PTHR43105:SF11">
    <property type="entry name" value="PERIPLASMIC NITRATE REDUCTASE"/>
    <property type="match status" value="1"/>
</dbReference>
<dbReference type="PANTHER" id="PTHR43105">
    <property type="entry name" value="RESPIRATORY NITRATE REDUCTASE"/>
    <property type="match status" value="1"/>
</dbReference>
<dbReference type="Pfam" id="PF04879">
    <property type="entry name" value="Molybdop_Fe4S4"/>
    <property type="match status" value="1"/>
</dbReference>
<dbReference type="Pfam" id="PF00384">
    <property type="entry name" value="Molybdopterin"/>
    <property type="match status" value="1"/>
</dbReference>
<dbReference type="Pfam" id="PF01568">
    <property type="entry name" value="Molydop_binding"/>
    <property type="match status" value="1"/>
</dbReference>
<dbReference type="SMART" id="SM00926">
    <property type="entry name" value="Molybdop_Fe4S4"/>
    <property type="match status" value="1"/>
</dbReference>
<dbReference type="SUPFAM" id="SSF50692">
    <property type="entry name" value="ADC-like"/>
    <property type="match status" value="1"/>
</dbReference>
<dbReference type="SUPFAM" id="SSF53706">
    <property type="entry name" value="Formate dehydrogenase/DMSO reductase, domains 1-3"/>
    <property type="match status" value="1"/>
</dbReference>
<dbReference type="PROSITE" id="PS51669">
    <property type="entry name" value="4FE4S_MOW_BIS_MGD"/>
    <property type="match status" value="1"/>
</dbReference>
<dbReference type="PROSITE" id="PS00551">
    <property type="entry name" value="MOLYBDOPTERIN_PROK_1"/>
    <property type="match status" value="1"/>
</dbReference>
<dbReference type="PROSITE" id="PS51318">
    <property type="entry name" value="TAT"/>
    <property type="match status" value="1"/>
</dbReference>
<feature type="signal peptide" description="Tat-type signal" evidence="1">
    <location>
        <begin position="1"/>
        <end position="31"/>
    </location>
</feature>
<feature type="chain" id="PRO_0000046008" description="Nitrate reductase" evidence="1">
    <location>
        <begin position="32"/>
        <end position="754"/>
    </location>
</feature>
<feature type="domain" description="4Fe-4S Mo/W bis-MGD-type" evidence="1">
    <location>
        <begin position="39"/>
        <end position="95"/>
    </location>
</feature>
<feature type="binding site" evidence="1">
    <location>
        <position position="46"/>
    </location>
    <ligand>
        <name>[4Fe-4S] cluster</name>
        <dbReference type="ChEBI" id="CHEBI:49883"/>
    </ligand>
</feature>
<feature type="binding site" evidence="1">
    <location>
        <position position="49"/>
    </location>
    <ligand>
        <name>[4Fe-4S] cluster</name>
        <dbReference type="ChEBI" id="CHEBI:49883"/>
    </ligand>
</feature>
<feature type="binding site" evidence="1">
    <location>
        <position position="53"/>
    </location>
    <ligand>
        <name>[4Fe-4S] cluster</name>
        <dbReference type="ChEBI" id="CHEBI:49883"/>
    </ligand>
</feature>
<feature type="binding site" evidence="1">
    <location>
        <position position="81"/>
    </location>
    <ligand>
        <name>[4Fe-4S] cluster</name>
        <dbReference type="ChEBI" id="CHEBI:49883"/>
    </ligand>
</feature>
<feature type="binding site" evidence="1">
    <location>
        <position position="83"/>
    </location>
    <ligand>
        <name>Mo-bis(molybdopterin guanine dinucleotide)</name>
        <dbReference type="ChEBI" id="CHEBI:60539"/>
    </ligand>
</feature>
<feature type="binding site" evidence="1">
    <location>
        <position position="144"/>
    </location>
    <ligand>
        <name>Mo-bis(molybdopterin guanine dinucleotide)</name>
        <dbReference type="ChEBI" id="CHEBI:60539"/>
    </ligand>
</feature>
<feature type="binding site" evidence="1">
    <location>
        <position position="169"/>
    </location>
    <ligand>
        <name>Mo-bis(molybdopterin guanine dinucleotide)</name>
        <dbReference type="ChEBI" id="CHEBI:60539"/>
    </ligand>
</feature>
<feature type="binding site" evidence="1">
    <location>
        <position position="173"/>
    </location>
    <ligand>
        <name>Mo-bis(molybdopterin guanine dinucleotide)</name>
        <dbReference type="ChEBI" id="CHEBI:60539"/>
    </ligand>
</feature>
<feature type="binding site" evidence="1">
    <location>
        <begin position="256"/>
        <end position="258"/>
    </location>
    <ligand>
        <name>Mo-bis(molybdopterin guanine dinucleotide)</name>
        <dbReference type="ChEBI" id="CHEBI:60539"/>
    </ligand>
</feature>
<feature type="binding site" evidence="1">
    <location>
        <position position="341"/>
    </location>
    <ligand>
        <name>Mo-bis(molybdopterin guanine dinucleotide)</name>
        <dbReference type="ChEBI" id="CHEBI:60539"/>
    </ligand>
</feature>
<feature type="binding site" evidence="1">
    <location>
        <position position="345"/>
    </location>
    <ligand>
        <name>Mo-bis(molybdopterin guanine dinucleotide)</name>
        <dbReference type="ChEBI" id="CHEBI:60539"/>
    </ligand>
</feature>
<feature type="binding site" evidence="1">
    <location>
        <position position="451"/>
    </location>
    <ligand>
        <name>Mo-bis(molybdopterin guanine dinucleotide)</name>
        <dbReference type="ChEBI" id="CHEBI:60539"/>
    </ligand>
</feature>
<feature type="binding site" evidence="1">
    <location>
        <position position="497"/>
    </location>
    <ligand>
        <name>Mo-bis(molybdopterin guanine dinucleotide)</name>
        <dbReference type="ChEBI" id="CHEBI:60539"/>
    </ligand>
</feature>
<feature type="binding site" evidence="1">
    <location>
        <position position="524"/>
    </location>
    <ligand>
        <name>Mo-bis(molybdopterin guanine dinucleotide)</name>
        <dbReference type="ChEBI" id="CHEBI:60539"/>
    </ligand>
</feature>
<feature type="binding site" evidence="1">
    <location>
        <begin position="642"/>
        <end position="651"/>
    </location>
    <ligand>
        <name>Mo-bis(molybdopterin guanine dinucleotide)</name>
        <dbReference type="ChEBI" id="CHEBI:60539"/>
    </ligand>
</feature>
<feature type="binding site" evidence="1">
    <location>
        <position position="728"/>
    </location>
    <ligand>
        <name>Mo-bis(molybdopterin guanine dinucleotide)</name>
        <dbReference type="ChEBI" id="CHEBI:60539"/>
    </ligand>
</feature>
<feature type="binding site" evidence="1">
    <location>
        <position position="745"/>
    </location>
    <ligand>
        <name>Mo-bis(molybdopterin guanine dinucleotide)</name>
        <dbReference type="ChEBI" id="CHEBI:60539"/>
    </ligand>
</feature>
<keyword id="KW-0004">4Fe-4S</keyword>
<keyword id="KW-0249">Electron transport</keyword>
<keyword id="KW-0408">Iron</keyword>
<keyword id="KW-0411">Iron-sulfur</keyword>
<keyword id="KW-0479">Metal-binding</keyword>
<keyword id="KW-0500">Molybdenum</keyword>
<keyword id="KW-0534">Nitrate assimilation</keyword>
<keyword id="KW-0560">Oxidoreductase</keyword>
<keyword id="KW-1185">Reference proteome</keyword>
<keyword id="KW-0964">Secreted</keyword>
<keyword id="KW-0732">Signal</keyword>
<keyword id="KW-0813">Transport</keyword>
<proteinExistence type="inferred from homology"/>
<evidence type="ECO:0000255" key="1">
    <source>
        <dbReference type="HAMAP-Rule" id="MF_01630"/>
    </source>
</evidence>
<protein>
    <recommendedName>
        <fullName evidence="1">Nitrate reductase</fullName>
        <ecNumber evidence="1">1.9.6.1</ecNumber>
    </recommendedName>
</protein>
<sequence length="754" mass="83580">MKFTRRSFVKASALATAMVAAGCSPQPVAPKQNPETEGATWYKTVCRYCGVGCGVMVAAKDNRVVAVKGDTENPVNKGLLCVKGYYLDRIMNTEEGRILKPLIRKNGQLTEASWDEALDLVAARFREAIDQHGPDSVGFYGSGQNLAEETYIANKLFKGCIGTNNVEGNPRTCMASAVAGFLSTFGKDEPMGNLDDIEHADTFFIIGSNTAEAHPIIYSRITTRKQTGKDVKVILADPRRHRVADIADIFLPFRPGTDLALLNAFAQVIIEEGLHDPDFIERHTTFQDGNGAITFEQYVAFLQDYTPEKVAPITGLSPDDIRAAAREIGARGRKTMTLWCMGINQRTVGTWLNNAIYNLHLLTGKICQPGNSPFSLTGQPSACGSVREGGGLSHLLPCGRQVTNEQHRKEVAAVWGVDYTRMSDKVGYHTMEMFRAAGDGRIKALLISCTNPGHSLPNLNSVRASLEKTFLVVMDAFHNRTTELADVVLPSALWCEKEGIYGNTERRTQHLAKAVEPKGEARPDVWILLEIAKRLGYGEYFSHYTSNEVIWEEFRKMGGGGTGYDYAPYERYKQERGLRWPVNDKQPAGTTLRYVEGDDPFVPEGAGIYFYGKPDGKAVIYARPHRDPAEVPDAEYPFYLSTGRILEHWHTITMTKRVPEIMKGAGEFYCEIHEEDAARLGIQNGDLVKLTSRRGQVVATARVGGRAVPQKGLVFLLMHDDRTERLANFLTNDAVDETSKQMEYKVCAVRVEKA</sequence>
<reference key="1">
    <citation type="journal article" date="2004" name="Nucleic Acids Res.">
        <title>Genome sequence of Symbiobacterium thermophilum, an uncultivable bacterium that depends on microbial commensalism.</title>
        <authorList>
            <person name="Ueda K."/>
            <person name="Yamashita A."/>
            <person name="Ishikawa J."/>
            <person name="Shimada M."/>
            <person name="Watsuji T."/>
            <person name="Morimura K."/>
            <person name="Ikeda H."/>
            <person name="Hattori M."/>
            <person name="Beppu T."/>
        </authorList>
    </citation>
    <scope>NUCLEOTIDE SEQUENCE [LARGE SCALE GENOMIC DNA]</scope>
    <source>
        <strain>DSM 24528 / JCM 14929 / IAM 14863 / T</strain>
    </source>
</reference>
<comment type="function">
    <text evidence="1">Catalytic subunit of the nitrate reductase complex NapAB. Receives electrons from NapB and catalyzes the reduction of nitrate to nitrite.</text>
</comment>
<comment type="catalytic activity">
    <reaction evidence="1">
        <text>2 Fe(II)-[cytochrome] + nitrate + 2 H(+) = 2 Fe(III)-[cytochrome] + nitrite + H2O</text>
        <dbReference type="Rhea" id="RHEA:12909"/>
        <dbReference type="Rhea" id="RHEA-COMP:11777"/>
        <dbReference type="Rhea" id="RHEA-COMP:11778"/>
        <dbReference type="ChEBI" id="CHEBI:15377"/>
        <dbReference type="ChEBI" id="CHEBI:15378"/>
        <dbReference type="ChEBI" id="CHEBI:16301"/>
        <dbReference type="ChEBI" id="CHEBI:17632"/>
        <dbReference type="ChEBI" id="CHEBI:29033"/>
        <dbReference type="ChEBI" id="CHEBI:29034"/>
        <dbReference type="EC" id="1.9.6.1"/>
    </reaction>
</comment>
<comment type="cofactor">
    <cofactor evidence="1">
        <name>[4Fe-4S] cluster</name>
        <dbReference type="ChEBI" id="CHEBI:49883"/>
    </cofactor>
    <text evidence="1">Binds 1 [4Fe-4S] cluster.</text>
</comment>
<comment type="cofactor">
    <cofactor evidence="1">
        <name>Mo-bis(molybdopterin guanine dinucleotide)</name>
        <dbReference type="ChEBI" id="CHEBI:60539"/>
    </cofactor>
    <text evidence="1">Binds 1 molybdenum-bis(molybdopterin guanine dinucleotide) (Mo-bis-MGD) cofactor per subunit.</text>
</comment>
<comment type="subunit">
    <text evidence="1">Component of the nitrate reductase NapAB complex composed of NapA and NapB.</text>
</comment>
<comment type="subcellular location">
    <subcellularLocation>
        <location evidence="1">Secreted</location>
    </subcellularLocation>
    <text evidence="1">Membrane-associated.</text>
</comment>
<comment type="PTM">
    <text evidence="1">Predicted to be exported by the Tat system. The position of the signal peptide cleavage has not been experimentally proven.</text>
</comment>
<comment type="similarity">
    <text evidence="1">Belongs to the prokaryotic molybdopterin-containing oxidoreductase family. NasA/NapA/NarB subfamily.</text>
</comment>
<organism>
    <name type="scientific">Symbiobacterium thermophilum (strain DSM 24528 / JCM 14929 / IAM 14863 / T)</name>
    <dbReference type="NCBI Taxonomy" id="292459"/>
    <lineage>
        <taxon>Bacteria</taxon>
        <taxon>Bacillati</taxon>
        <taxon>Bacillota</taxon>
        <taxon>Clostridia</taxon>
        <taxon>Eubacteriales</taxon>
        <taxon>Symbiobacteriaceae</taxon>
        <taxon>Symbiobacterium</taxon>
    </lineage>
</organism>
<accession>Q67QZ1</accession>
<name>NAPA_SYMTH</name>
<gene>
    <name evidence="1" type="primary">napA</name>
    <name type="ordered locus">STH917</name>
</gene>